<proteinExistence type="inferred from homology"/>
<feature type="chain" id="PRO_0000356996" description="Kynureninase">
    <location>
        <begin position="1"/>
        <end position="416"/>
    </location>
</feature>
<feature type="binding site" evidence="1">
    <location>
        <position position="97"/>
    </location>
    <ligand>
        <name>pyridoxal 5'-phosphate</name>
        <dbReference type="ChEBI" id="CHEBI:597326"/>
    </ligand>
</feature>
<feature type="binding site" evidence="1">
    <location>
        <position position="98"/>
    </location>
    <ligand>
        <name>pyridoxal 5'-phosphate</name>
        <dbReference type="ChEBI" id="CHEBI:597326"/>
    </ligand>
</feature>
<feature type="binding site" evidence="1">
    <location>
        <begin position="129"/>
        <end position="132"/>
    </location>
    <ligand>
        <name>pyridoxal 5'-phosphate</name>
        <dbReference type="ChEBI" id="CHEBI:597326"/>
    </ligand>
</feature>
<feature type="binding site" evidence="1">
    <location>
        <position position="172"/>
    </location>
    <ligand>
        <name>pyridoxal 5'-phosphate</name>
        <dbReference type="ChEBI" id="CHEBI:597326"/>
    </ligand>
</feature>
<feature type="binding site" evidence="1">
    <location>
        <position position="201"/>
    </location>
    <ligand>
        <name>pyridoxal 5'-phosphate</name>
        <dbReference type="ChEBI" id="CHEBI:597326"/>
    </ligand>
</feature>
<feature type="binding site" evidence="1">
    <location>
        <position position="204"/>
    </location>
    <ligand>
        <name>pyridoxal 5'-phosphate</name>
        <dbReference type="ChEBI" id="CHEBI:597326"/>
    </ligand>
</feature>
<feature type="binding site" evidence="1">
    <location>
        <position position="226"/>
    </location>
    <ligand>
        <name>pyridoxal 5'-phosphate</name>
        <dbReference type="ChEBI" id="CHEBI:597326"/>
    </ligand>
</feature>
<feature type="binding site" evidence="1">
    <location>
        <position position="256"/>
    </location>
    <ligand>
        <name>pyridoxal 5'-phosphate</name>
        <dbReference type="ChEBI" id="CHEBI:597326"/>
    </ligand>
</feature>
<feature type="binding site" evidence="1">
    <location>
        <position position="282"/>
    </location>
    <ligand>
        <name>pyridoxal 5'-phosphate</name>
        <dbReference type="ChEBI" id="CHEBI:597326"/>
    </ligand>
</feature>
<feature type="modified residue" description="N6-(pyridoxal phosphate)lysine" evidence="1">
    <location>
        <position position="227"/>
    </location>
</feature>
<name>KYNU_BURM9</name>
<evidence type="ECO:0000255" key="1">
    <source>
        <dbReference type="HAMAP-Rule" id="MF_01970"/>
    </source>
</evidence>
<organism>
    <name type="scientific">Burkholderia mallei (strain NCTC 10229)</name>
    <dbReference type="NCBI Taxonomy" id="412022"/>
    <lineage>
        <taxon>Bacteria</taxon>
        <taxon>Pseudomonadati</taxon>
        <taxon>Pseudomonadota</taxon>
        <taxon>Betaproteobacteria</taxon>
        <taxon>Burkholderiales</taxon>
        <taxon>Burkholderiaceae</taxon>
        <taxon>Burkholderia</taxon>
        <taxon>pseudomallei group</taxon>
    </lineage>
</organism>
<dbReference type="EC" id="3.7.1.3" evidence="1"/>
<dbReference type="EMBL" id="CP000546">
    <property type="protein sequence ID" value="ABN01433.1"/>
    <property type="molecule type" value="Genomic_DNA"/>
</dbReference>
<dbReference type="RefSeq" id="WP_004189663.1">
    <property type="nucleotide sequence ID" value="NC_008836.1"/>
</dbReference>
<dbReference type="SMR" id="A2S925"/>
<dbReference type="GeneID" id="92978122"/>
<dbReference type="KEGG" id="bml:BMA10229_A2486"/>
<dbReference type="HOGENOM" id="CLU_003433_4_1_4"/>
<dbReference type="UniPathway" id="UPA00253">
    <property type="reaction ID" value="UER00329"/>
</dbReference>
<dbReference type="UniPathway" id="UPA00334">
    <property type="reaction ID" value="UER00455"/>
</dbReference>
<dbReference type="Proteomes" id="UP000002283">
    <property type="component" value="Chromosome I"/>
</dbReference>
<dbReference type="GO" id="GO:0005737">
    <property type="term" value="C:cytoplasm"/>
    <property type="evidence" value="ECO:0007669"/>
    <property type="project" value="InterPro"/>
</dbReference>
<dbReference type="GO" id="GO:0030429">
    <property type="term" value="F:kynureninase activity"/>
    <property type="evidence" value="ECO:0007669"/>
    <property type="project" value="UniProtKB-UniRule"/>
</dbReference>
<dbReference type="GO" id="GO:0030170">
    <property type="term" value="F:pyridoxal phosphate binding"/>
    <property type="evidence" value="ECO:0007669"/>
    <property type="project" value="UniProtKB-UniRule"/>
</dbReference>
<dbReference type="GO" id="GO:0043420">
    <property type="term" value="P:anthranilate metabolic process"/>
    <property type="evidence" value="ECO:0007669"/>
    <property type="project" value="TreeGrafter"/>
</dbReference>
<dbReference type="GO" id="GO:0097053">
    <property type="term" value="P:L-kynurenine catabolic process"/>
    <property type="evidence" value="ECO:0007669"/>
    <property type="project" value="UniProtKB-UniRule"/>
</dbReference>
<dbReference type="GO" id="GO:0019441">
    <property type="term" value="P:L-tryptophan catabolic process to kynurenine"/>
    <property type="evidence" value="ECO:0007669"/>
    <property type="project" value="TreeGrafter"/>
</dbReference>
<dbReference type="GO" id="GO:0009435">
    <property type="term" value="P:NAD biosynthetic process"/>
    <property type="evidence" value="ECO:0007669"/>
    <property type="project" value="UniProtKB-UniPathway"/>
</dbReference>
<dbReference type="GO" id="GO:0019805">
    <property type="term" value="P:quinolinate biosynthetic process"/>
    <property type="evidence" value="ECO:0007669"/>
    <property type="project" value="UniProtKB-UniRule"/>
</dbReference>
<dbReference type="FunFam" id="3.40.640.10:FF:000107">
    <property type="entry name" value="Kynureninase"/>
    <property type="match status" value="1"/>
</dbReference>
<dbReference type="Gene3D" id="3.90.1150.10">
    <property type="entry name" value="Aspartate Aminotransferase, domain 1"/>
    <property type="match status" value="1"/>
</dbReference>
<dbReference type="Gene3D" id="3.40.640.10">
    <property type="entry name" value="Type I PLP-dependent aspartate aminotransferase-like (Major domain)"/>
    <property type="match status" value="1"/>
</dbReference>
<dbReference type="HAMAP" id="MF_01970">
    <property type="entry name" value="Kynureninase"/>
    <property type="match status" value="1"/>
</dbReference>
<dbReference type="InterPro" id="IPR010111">
    <property type="entry name" value="Kynureninase"/>
</dbReference>
<dbReference type="InterPro" id="IPR015424">
    <property type="entry name" value="PyrdxlP-dep_Trfase"/>
</dbReference>
<dbReference type="InterPro" id="IPR015421">
    <property type="entry name" value="PyrdxlP-dep_Trfase_major"/>
</dbReference>
<dbReference type="InterPro" id="IPR015422">
    <property type="entry name" value="PyrdxlP-dep_Trfase_small"/>
</dbReference>
<dbReference type="NCBIfam" id="TIGR01814">
    <property type="entry name" value="kynureninase"/>
    <property type="match status" value="1"/>
</dbReference>
<dbReference type="PANTHER" id="PTHR14084">
    <property type="entry name" value="KYNURENINASE"/>
    <property type="match status" value="1"/>
</dbReference>
<dbReference type="PANTHER" id="PTHR14084:SF0">
    <property type="entry name" value="KYNURENINASE"/>
    <property type="match status" value="1"/>
</dbReference>
<dbReference type="Pfam" id="PF22580">
    <property type="entry name" value="KYNU_C"/>
    <property type="match status" value="1"/>
</dbReference>
<dbReference type="PIRSF" id="PIRSF038800">
    <property type="entry name" value="KYNU"/>
    <property type="match status" value="1"/>
</dbReference>
<dbReference type="SUPFAM" id="SSF53383">
    <property type="entry name" value="PLP-dependent transferases"/>
    <property type="match status" value="1"/>
</dbReference>
<gene>
    <name evidence="1" type="primary">kynU</name>
    <name type="ordered locus">BMA10229_A2486</name>
</gene>
<keyword id="KW-0378">Hydrolase</keyword>
<keyword id="KW-0662">Pyridine nucleotide biosynthesis</keyword>
<keyword id="KW-0663">Pyridoxal phosphate</keyword>
<protein>
    <recommendedName>
        <fullName evidence="1">Kynureninase</fullName>
        <ecNumber evidence="1">3.7.1.3</ecNumber>
    </recommendedName>
    <alternativeName>
        <fullName evidence="1">L-kynurenine hydrolase</fullName>
    </alternativeName>
</protein>
<accession>A2S925</accession>
<reference key="1">
    <citation type="journal article" date="2010" name="Genome Biol. Evol.">
        <title>Continuing evolution of Burkholderia mallei through genome reduction and large-scale rearrangements.</title>
        <authorList>
            <person name="Losada L."/>
            <person name="Ronning C.M."/>
            <person name="DeShazer D."/>
            <person name="Woods D."/>
            <person name="Fedorova N."/>
            <person name="Kim H.S."/>
            <person name="Shabalina S.A."/>
            <person name="Pearson T.R."/>
            <person name="Brinkac L."/>
            <person name="Tan P."/>
            <person name="Nandi T."/>
            <person name="Crabtree J."/>
            <person name="Badger J."/>
            <person name="Beckstrom-Sternberg S."/>
            <person name="Saqib M."/>
            <person name="Schutzer S.E."/>
            <person name="Keim P."/>
            <person name="Nierman W.C."/>
        </authorList>
    </citation>
    <scope>NUCLEOTIDE SEQUENCE [LARGE SCALE GENOMIC DNA]</scope>
    <source>
        <strain>NCTC 10229</strain>
    </source>
</reference>
<comment type="function">
    <text evidence="1">Catalyzes the cleavage of L-kynurenine (L-Kyn) and L-3-hydroxykynurenine (L-3OHKyn) into anthranilic acid (AA) and 3-hydroxyanthranilic acid (3-OHAA), respectively.</text>
</comment>
<comment type="catalytic activity">
    <reaction evidence="1">
        <text>L-kynurenine + H2O = anthranilate + L-alanine + H(+)</text>
        <dbReference type="Rhea" id="RHEA:16813"/>
        <dbReference type="ChEBI" id="CHEBI:15377"/>
        <dbReference type="ChEBI" id="CHEBI:15378"/>
        <dbReference type="ChEBI" id="CHEBI:16567"/>
        <dbReference type="ChEBI" id="CHEBI:57959"/>
        <dbReference type="ChEBI" id="CHEBI:57972"/>
        <dbReference type="EC" id="3.7.1.3"/>
    </reaction>
</comment>
<comment type="catalytic activity">
    <reaction evidence="1">
        <text>3-hydroxy-L-kynurenine + H2O = 3-hydroxyanthranilate + L-alanine + H(+)</text>
        <dbReference type="Rhea" id="RHEA:25143"/>
        <dbReference type="ChEBI" id="CHEBI:15377"/>
        <dbReference type="ChEBI" id="CHEBI:15378"/>
        <dbReference type="ChEBI" id="CHEBI:36559"/>
        <dbReference type="ChEBI" id="CHEBI:57972"/>
        <dbReference type="ChEBI" id="CHEBI:58125"/>
        <dbReference type="EC" id="3.7.1.3"/>
    </reaction>
</comment>
<comment type="cofactor">
    <cofactor evidence="1">
        <name>pyridoxal 5'-phosphate</name>
        <dbReference type="ChEBI" id="CHEBI:597326"/>
    </cofactor>
</comment>
<comment type="pathway">
    <text evidence="1">Amino-acid degradation; L-kynurenine degradation; L-alanine and anthranilate from L-kynurenine: step 1/1.</text>
</comment>
<comment type="pathway">
    <text evidence="1">Cofactor biosynthesis; NAD(+) biosynthesis; quinolinate from L-kynurenine: step 2/3.</text>
</comment>
<comment type="subunit">
    <text evidence="1">Homodimer.</text>
</comment>
<comment type="similarity">
    <text evidence="1">Belongs to the kynureninase family.</text>
</comment>
<sequence>MKTREEALALDRDDPLAPLREQFALPAGVIYLDGNSLGAQPRAAAARAQQVIGAEWGEGLIRSWNTAGWFALPRRLGDRLAPLIGAADDEVAITDTISINLFKLLAAMLRHQARHAPKRRVIVSERSNFPTDLYIAQGLIAQLDRDYELRLIDDPADLPDALDDETAVAMITHVNYRTGYMHDMPSVTQTVRQAGALMLWDLAHSAGAVPVDLNGALADGAVGCTYKYLNGGPGSPAFVWVPKRHQRAFEQPLSGWWGHRAPFAMQPAFEPDPGIARFLCGTQPIVSMSMVECGLDVFAQTDMHAIRRKSLALTDAFVALVESRCAGQPLKLVTPRAHHQRGSQASFEHPHGYEVMQALIARGVIGDYREPRILRFGFTPLYTRFVDVWDAVETLRDILDTEAWRAPEFATRAAVT</sequence>